<comment type="function">
    <text evidence="1">Part of an energy-coupled inorganic carbon pump.</text>
</comment>
<comment type="cofactor">
    <cofactor evidence="1">
        <name>Zn(2+)</name>
        <dbReference type="ChEBI" id="CHEBI:29105"/>
    </cofactor>
</comment>
<comment type="subunit">
    <text evidence="1">Forms a complex with DabB.</text>
</comment>
<comment type="subcellular location">
    <subcellularLocation>
        <location evidence="1">Cell inner membrane</location>
        <topology evidence="1">Peripheral membrane protein</topology>
    </subcellularLocation>
</comment>
<comment type="similarity">
    <text evidence="1">Belongs to the inorganic carbon transporter (TC 9.A.2) DabA family.</text>
</comment>
<name>DABA_VIBCH</name>
<keyword id="KW-0997">Cell inner membrane</keyword>
<keyword id="KW-1003">Cell membrane</keyword>
<keyword id="KW-0472">Membrane</keyword>
<keyword id="KW-0479">Metal-binding</keyword>
<keyword id="KW-1185">Reference proteome</keyword>
<keyword id="KW-0813">Transport</keyword>
<keyword id="KW-0862">Zinc</keyword>
<gene>
    <name evidence="1" type="primary">dabA</name>
    <name type="ordered locus">VC_1582</name>
</gene>
<organism>
    <name type="scientific">Vibrio cholerae serotype O1 (strain ATCC 39315 / El Tor Inaba N16961)</name>
    <dbReference type="NCBI Taxonomy" id="243277"/>
    <lineage>
        <taxon>Bacteria</taxon>
        <taxon>Pseudomonadati</taxon>
        <taxon>Pseudomonadota</taxon>
        <taxon>Gammaproteobacteria</taxon>
        <taxon>Vibrionales</taxon>
        <taxon>Vibrionaceae</taxon>
        <taxon>Vibrio</taxon>
    </lineage>
</organism>
<protein>
    <recommendedName>
        <fullName evidence="1">Probable inorganic carbon transporter subunit DabA</fullName>
    </recommendedName>
</protein>
<proteinExistence type="inferred from homology"/>
<feature type="chain" id="PRO_0000387323" description="Probable inorganic carbon transporter subunit DabA">
    <location>
        <begin position="1"/>
        <end position="862"/>
    </location>
</feature>
<feature type="binding site" evidence="1">
    <location>
        <position position="365"/>
    </location>
    <ligand>
        <name>Zn(2+)</name>
        <dbReference type="ChEBI" id="CHEBI:29105"/>
    </ligand>
</feature>
<feature type="binding site" evidence="1">
    <location>
        <position position="367"/>
    </location>
    <ligand>
        <name>Zn(2+)</name>
        <dbReference type="ChEBI" id="CHEBI:29105"/>
    </ligand>
</feature>
<feature type="binding site" evidence="1">
    <location>
        <position position="540"/>
    </location>
    <ligand>
        <name>Zn(2+)</name>
        <dbReference type="ChEBI" id="CHEBI:29105"/>
    </ligand>
</feature>
<feature type="binding site" evidence="1">
    <location>
        <position position="555"/>
    </location>
    <ligand>
        <name>Zn(2+)</name>
        <dbReference type="ChEBI" id="CHEBI:29105"/>
    </ligand>
</feature>
<evidence type="ECO:0000255" key="1">
    <source>
        <dbReference type="HAMAP-Rule" id="MF_01871"/>
    </source>
</evidence>
<accession>Q9KRQ4</accession>
<dbReference type="EMBL" id="AE003852">
    <property type="protein sequence ID" value="AAF94736.1"/>
    <property type="molecule type" value="Genomic_DNA"/>
</dbReference>
<dbReference type="PIR" id="H82182">
    <property type="entry name" value="H82182"/>
</dbReference>
<dbReference type="RefSeq" id="NP_231222.1">
    <property type="nucleotide sequence ID" value="NC_002505.1"/>
</dbReference>
<dbReference type="STRING" id="243277.VC_1582"/>
<dbReference type="DNASU" id="2613836"/>
<dbReference type="EnsemblBacteria" id="AAF94736">
    <property type="protein sequence ID" value="AAF94736"/>
    <property type="gene ID" value="VC_1582"/>
</dbReference>
<dbReference type="KEGG" id="vch:VC_1582"/>
<dbReference type="PATRIC" id="fig|243277.26.peg.1509"/>
<dbReference type="eggNOG" id="COG3002">
    <property type="taxonomic scope" value="Bacteria"/>
</dbReference>
<dbReference type="HOGENOM" id="CLU_009885_1_0_6"/>
<dbReference type="Proteomes" id="UP000000584">
    <property type="component" value="Chromosome 1"/>
</dbReference>
<dbReference type="GO" id="GO:0005886">
    <property type="term" value="C:plasma membrane"/>
    <property type="evidence" value="ECO:0007669"/>
    <property type="project" value="UniProtKB-SubCell"/>
</dbReference>
<dbReference type="GO" id="GO:0008270">
    <property type="term" value="F:zinc ion binding"/>
    <property type="evidence" value="ECO:0007669"/>
    <property type="project" value="UniProtKB-UniRule"/>
</dbReference>
<dbReference type="HAMAP" id="MF_01871">
    <property type="entry name" value="DabA"/>
    <property type="match status" value="1"/>
</dbReference>
<dbReference type="InterPro" id="IPR018752">
    <property type="entry name" value="DabA"/>
</dbReference>
<dbReference type="PANTHER" id="PTHR38344:SF1">
    <property type="entry name" value="INORGANIC CARBON TRANSPORTER SUBUNIT DABA-RELATED"/>
    <property type="match status" value="1"/>
</dbReference>
<dbReference type="PANTHER" id="PTHR38344">
    <property type="entry name" value="UPF0753 PROTEIN AQ_863"/>
    <property type="match status" value="1"/>
</dbReference>
<dbReference type="Pfam" id="PF10070">
    <property type="entry name" value="DabA"/>
    <property type="match status" value="1"/>
</dbReference>
<sequence>MARAINSAYRSFINSSATDDRRTRMNAPRSLSALSTTANPALSTLVEQVCALIAPNWPLDRMIAVSPYWKRIDKPFAQAAAELKQLAASPMTMTLSDYHLRWQNKQIQSADLQQAIAEQNSDLSESTLIAALQQPTAPSHPWPLLCDTVDSRRDLEHHPAWNDAITHQISQFCAAYFDHHQADWSPDQQTGLFATWREAMIHDRSITLLLNETSVKQKATKLPEDAMAAIEQTLAQLAIAPAQQETYLQAVLMRISGWASWCAYLAWQAGFEGRHDEHLRDLLAIRLCWENLLDDGERGMGSVWLQWQQSWAPRQSCEEDRALRIALLWQRSAEIAYQRQLFAALTSAQESAPQSSYPEVQAAFCIDVRSEVIRRHLEAQSPHIQTLGFAGFFGLPIRYQLLGTEASRPQLPGLLAPSLIVSDSTGNEDQDAKLALRRRARLKRHFSWRAFHHLPASTFTLVETTGLAYLTKLLKRTLSYPALSASVERFAFTEHEWQSVKPQFTRDPQTLAQRAQMAANILRALGIATEQARLVLLVGHGSQTQNNPQRAGLDCGACCGQSGEVNARTLAALLNDQAVRQALPEYGISLRDDVHFIAALHNTTTEAMRLFDRHEIPTSHREALEQLDQQLTAASHGARQERAPSLELNHNHQAPPSKDNALSAQQLEQAFLRRAHDWAQTRPEWGLTNNAAFIIAPRQRSKQAKLDGRVFLHEYQPERDPEGQLLTQIMTAPMLVTHWINMQYFASTVDNRRFGSGNKTLHNVVGGNIGLFEGNGGDLRCGLALQSLHDGQGWRHEALRLTVVIDAPRERIEQVMASHRVVEHLVKHEWLYLARFADQGIEIYLQGTWQRITQPSSDSSAR</sequence>
<reference key="1">
    <citation type="journal article" date="2000" name="Nature">
        <title>DNA sequence of both chromosomes of the cholera pathogen Vibrio cholerae.</title>
        <authorList>
            <person name="Heidelberg J.F."/>
            <person name="Eisen J.A."/>
            <person name="Nelson W.C."/>
            <person name="Clayton R.A."/>
            <person name="Gwinn M.L."/>
            <person name="Dodson R.J."/>
            <person name="Haft D.H."/>
            <person name="Hickey E.K."/>
            <person name="Peterson J.D."/>
            <person name="Umayam L.A."/>
            <person name="Gill S.R."/>
            <person name="Nelson K.E."/>
            <person name="Read T.D."/>
            <person name="Tettelin H."/>
            <person name="Richardson D.L."/>
            <person name="Ermolaeva M.D."/>
            <person name="Vamathevan J.J."/>
            <person name="Bass S."/>
            <person name="Qin H."/>
            <person name="Dragoi I."/>
            <person name="Sellers P."/>
            <person name="McDonald L.A."/>
            <person name="Utterback T.R."/>
            <person name="Fleischmann R.D."/>
            <person name="Nierman W.C."/>
            <person name="White O."/>
            <person name="Salzberg S.L."/>
            <person name="Smith H.O."/>
            <person name="Colwell R.R."/>
            <person name="Mekalanos J.J."/>
            <person name="Venter J.C."/>
            <person name="Fraser C.M."/>
        </authorList>
    </citation>
    <scope>NUCLEOTIDE SEQUENCE [LARGE SCALE GENOMIC DNA]</scope>
    <source>
        <strain>ATCC 39315 / El Tor Inaba N16961</strain>
    </source>
</reference>